<organism>
    <name type="scientific">Schizosaccharomyces pombe (strain 972 / ATCC 24843)</name>
    <name type="common">Fission yeast</name>
    <dbReference type="NCBI Taxonomy" id="284812"/>
    <lineage>
        <taxon>Eukaryota</taxon>
        <taxon>Fungi</taxon>
        <taxon>Dikarya</taxon>
        <taxon>Ascomycota</taxon>
        <taxon>Taphrinomycotina</taxon>
        <taxon>Schizosaccharomycetes</taxon>
        <taxon>Schizosaccharomycetales</taxon>
        <taxon>Schizosaccharomycetaceae</taxon>
        <taxon>Schizosaccharomyces</taxon>
    </lineage>
</organism>
<name>SLF1_SCHPO</name>
<protein>
    <recommendedName>
        <fullName evidence="4">Skb1 localization factor 1</fullName>
    </recommendedName>
</protein>
<feature type="chain" id="PRO_0000304011" description="Skb1 localization factor 1">
    <location>
        <begin position="1"/>
        <end position="485"/>
    </location>
</feature>
<feature type="region of interest" description="Sufficient for interaction with Skb1" evidence="3">
    <location>
        <begin position="1"/>
        <end position="200"/>
    </location>
</feature>
<feature type="region of interest" description="Disordered" evidence="1">
    <location>
        <begin position="117"/>
        <end position="230"/>
    </location>
</feature>
<feature type="region of interest" description="Disordered" evidence="1">
    <location>
        <begin position="286"/>
        <end position="416"/>
    </location>
</feature>
<feature type="region of interest" description="Disordered" evidence="1">
    <location>
        <begin position="446"/>
        <end position="466"/>
    </location>
</feature>
<feature type="region of interest" description="Required and sufficient for plasma membrane anchoring; lysine-rich, may bind to anionic lipids in the plasma membrane" evidence="3">
    <location>
        <begin position="451"/>
        <end position="485"/>
    </location>
</feature>
<feature type="compositionally biased region" description="Polar residues" evidence="1">
    <location>
        <begin position="171"/>
        <end position="182"/>
    </location>
</feature>
<feature type="compositionally biased region" description="Basic and acidic residues" evidence="1">
    <location>
        <begin position="189"/>
        <end position="198"/>
    </location>
</feature>
<feature type="compositionally biased region" description="Polar residues" evidence="1">
    <location>
        <begin position="218"/>
        <end position="230"/>
    </location>
</feature>
<feature type="compositionally biased region" description="Polar residues" evidence="1">
    <location>
        <begin position="341"/>
        <end position="363"/>
    </location>
</feature>
<feature type="compositionally biased region" description="Basic and acidic residues" evidence="1">
    <location>
        <begin position="371"/>
        <end position="393"/>
    </location>
</feature>
<feature type="compositionally biased region" description="Polar residues" evidence="1">
    <location>
        <begin position="394"/>
        <end position="416"/>
    </location>
</feature>
<feature type="compositionally biased region" description="Basic and acidic residues" evidence="1">
    <location>
        <begin position="447"/>
        <end position="464"/>
    </location>
</feature>
<feature type="modified residue" description="Phosphoserine" evidence="2">
    <location>
        <position position="222"/>
    </location>
</feature>
<feature type="modified residue" description="Phosphoserine" evidence="2">
    <location>
        <position position="458"/>
    </location>
</feature>
<dbReference type="EMBL" id="CU329670">
    <property type="protein sequence ID" value="CAB57437.1"/>
    <property type="molecule type" value="Genomic_DNA"/>
</dbReference>
<dbReference type="PIR" id="T41714">
    <property type="entry name" value="T41714"/>
</dbReference>
<dbReference type="RefSeq" id="NP_593156.1">
    <property type="nucleotide sequence ID" value="NM_001018554.2"/>
</dbReference>
<dbReference type="BioGRID" id="279628">
    <property type="interactions" value="4"/>
</dbReference>
<dbReference type="STRING" id="284812.Q9UT50"/>
<dbReference type="iPTMnet" id="Q9UT50"/>
<dbReference type="SwissPalm" id="Q9UT50"/>
<dbReference type="PaxDb" id="4896-SPAC821.03c.1"/>
<dbReference type="EnsemblFungi" id="SPAC821.03c.1">
    <property type="protein sequence ID" value="SPAC821.03c.1:pep"/>
    <property type="gene ID" value="SPAC821.03c"/>
</dbReference>
<dbReference type="GeneID" id="2543199"/>
<dbReference type="KEGG" id="spo:2543199"/>
<dbReference type="PomBase" id="SPAC821.03c">
    <property type="gene designation" value="slf1"/>
</dbReference>
<dbReference type="VEuPathDB" id="FungiDB:SPAC821.03c"/>
<dbReference type="HOGENOM" id="CLU_573855_0_0_1"/>
<dbReference type="InParanoid" id="Q9UT50"/>
<dbReference type="OMA" id="FQALPYE"/>
<dbReference type="PRO" id="PR:Q9UT50"/>
<dbReference type="Proteomes" id="UP000002485">
    <property type="component" value="Chromosome I"/>
</dbReference>
<dbReference type="GO" id="GO:1990463">
    <property type="term" value="C:lateral cortical node"/>
    <property type="evidence" value="ECO:0000314"/>
    <property type="project" value="PomBase"/>
</dbReference>
<dbReference type="GO" id="GO:0005886">
    <property type="term" value="C:plasma membrane"/>
    <property type="evidence" value="ECO:0007669"/>
    <property type="project" value="UniProtKB-SubCell"/>
</dbReference>
<dbReference type="GO" id="GO:1903359">
    <property type="term" value="P:lateral cortical node assembly"/>
    <property type="evidence" value="ECO:0000315"/>
    <property type="project" value="PomBase"/>
</dbReference>
<dbReference type="GO" id="GO:1903360">
    <property type="term" value="P:protein localization to lateral cortical node"/>
    <property type="evidence" value="ECO:0000315"/>
    <property type="project" value="PomBase"/>
</dbReference>
<reference key="1">
    <citation type="journal article" date="2002" name="Nature">
        <title>The genome sequence of Schizosaccharomyces pombe.</title>
        <authorList>
            <person name="Wood V."/>
            <person name="Gwilliam R."/>
            <person name="Rajandream M.A."/>
            <person name="Lyne M.H."/>
            <person name="Lyne R."/>
            <person name="Stewart A."/>
            <person name="Sgouros J.G."/>
            <person name="Peat N."/>
            <person name="Hayles J."/>
            <person name="Baker S.G."/>
            <person name="Basham D."/>
            <person name="Bowman S."/>
            <person name="Brooks K."/>
            <person name="Brown D."/>
            <person name="Brown S."/>
            <person name="Chillingworth T."/>
            <person name="Churcher C.M."/>
            <person name="Collins M."/>
            <person name="Connor R."/>
            <person name="Cronin A."/>
            <person name="Davis P."/>
            <person name="Feltwell T."/>
            <person name="Fraser A."/>
            <person name="Gentles S."/>
            <person name="Goble A."/>
            <person name="Hamlin N."/>
            <person name="Harris D.E."/>
            <person name="Hidalgo J."/>
            <person name="Hodgson G."/>
            <person name="Holroyd S."/>
            <person name="Hornsby T."/>
            <person name="Howarth S."/>
            <person name="Huckle E.J."/>
            <person name="Hunt S."/>
            <person name="Jagels K."/>
            <person name="James K.D."/>
            <person name="Jones L."/>
            <person name="Jones M."/>
            <person name="Leather S."/>
            <person name="McDonald S."/>
            <person name="McLean J."/>
            <person name="Mooney P."/>
            <person name="Moule S."/>
            <person name="Mungall K.L."/>
            <person name="Murphy L.D."/>
            <person name="Niblett D."/>
            <person name="Odell C."/>
            <person name="Oliver K."/>
            <person name="O'Neil S."/>
            <person name="Pearson D."/>
            <person name="Quail M.A."/>
            <person name="Rabbinowitsch E."/>
            <person name="Rutherford K.M."/>
            <person name="Rutter S."/>
            <person name="Saunders D."/>
            <person name="Seeger K."/>
            <person name="Sharp S."/>
            <person name="Skelton J."/>
            <person name="Simmonds M.N."/>
            <person name="Squares R."/>
            <person name="Squares S."/>
            <person name="Stevens K."/>
            <person name="Taylor K."/>
            <person name="Taylor R.G."/>
            <person name="Tivey A."/>
            <person name="Walsh S.V."/>
            <person name="Warren T."/>
            <person name="Whitehead S."/>
            <person name="Woodward J.R."/>
            <person name="Volckaert G."/>
            <person name="Aert R."/>
            <person name="Robben J."/>
            <person name="Grymonprez B."/>
            <person name="Weltjens I."/>
            <person name="Vanstreels E."/>
            <person name="Rieger M."/>
            <person name="Schaefer M."/>
            <person name="Mueller-Auer S."/>
            <person name="Gabel C."/>
            <person name="Fuchs M."/>
            <person name="Duesterhoeft A."/>
            <person name="Fritzc C."/>
            <person name="Holzer E."/>
            <person name="Moestl D."/>
            <person name="Hilbert H."/>
            <person name="Borzym K."/>
            <person name="Langer I."/>
            <person name="Beck A."/>
            <person name="Lehrach H."/>
            <person name="Reinhardt R."/>
            <person name="Pohl T.M."/>
            <person name="Eger P."/>
            <person name="Zimmermann W."/>
            <person name="Wedler H."/>
            <person name="Wambutt R."/>
            <person name="Purnelle B."/>
            <person name="Goffeau A."/>
            <person name="Cadieu E."/>
            <person name="Dreano S."/>
            <person name="Gloux S."/>
            <person name="Lelaure V."/>
            <person name="Mottier S."/>
            <person name="Galibert F."/>
            <person name="Aves S.J."/>
            <person name="Xiang Z."/>
            <person name="Hunt C."/>
            <person name="Moore K."/>
            <person name="Hurst S.M."/>
            <person name="Lucas M."/>
            <person name="Rochet M."/>
            <person name="Gaillardin C."/>
            <person name="Tallada V.A."/>
            <person name="Garzon A."/>
            <person name="Thode G."/>
            <person name="Daga R.R."/>
            <person name="Cruzado L."/>
            <person name="Jimenez J."/>
            <person name="Sanchez M."/>
            <person name="del Rey F."/>
            <person name="Benito J."/>
            <person name="Dominguez A."/>
            <person name="Revuelta J.L."/>
            <person name="Moreno S."/>
            <person name="Armstrong J."/>
            <person name="Forsburg S.L."/>
            <person name="Cerutti L."/>
            <person name="Lowe T."/>
            <person name="McCombie W.R."/>
            <person name="Paulsen I."/>
            <person name="Potashkin J."/>
            <person name="Shpakovski G.V."/>
            <person name="Ussery D."/>
            <person name="Barrell B.G."/>
            <person name="Nurse P."/>
        </authorList>
    </citation>
    <scope>NUCLEOTIDE SEQUENCE [LARGE SCALE GENOMIC DNA]</scope>
    <source>
        <strain>972 / ATCC 24843</strain>
    </source>
</reference>
<reference key="2">
    <citation type="journal article" date="2008" name="J. Proteome Res.">
        <title>Phosphoproteome analysis of fission yeast.</title>
        <authorList>
            <person name="Wilson-Grady J.T."/>
            <person name="Villen J."/>
            <person name="Gygi S.P."/>
        </authorList>
    </citation>
    <scope>PHOSPHORYLATION [LARGE SCALE ANALYSIS] AT SER-222 AND SER-458</scope>
    <scope>IDENTIFICATION BY MASS SPECTROMETRY</scope>
</reference>
<reference key="3">
    <citation type="journal article" date="2014" name="Mol. Biol. Cell">
        <title>Megadalton-node assembly by binding of Skb1 to the membrane anchor Slf1.</title>
        <authorList>
            <person name="Deng L."/>
            <person name="Kabeche R."/>
            <person name="Wang N."/>
            <person name="Wu J.Q."/>
            <person name="Moseley J.B."/>
        </authorList>
    </citation>
    <scope>FUNCTION</scope>
    <scope>SUBCELLULAR LOCATION</scope>
    <scope>INTERACTION WITH SKB1</scope>
</reference>
<accession>Q9UT50</accession>
<proteinExistence type="evidence at protein level"/>
<gene>
    <name evidence="4" type="primary">slf1</name>
    <name evidence="5" type="ORF">SPAC821.03c</name>
</gene>
<keyword id="KW-1003">Cell membrane</keyword>
<keyword id="KW-0472">Membrane</keyword>
<keyword id="KW-0597">Phosphoprotein</keyword>
<keyword id="KW-1185">Reference proteome</keyword>
<sequence length="485" mass="53991">MSSIIQNPIESSYFVEDLSAVGNSQLHSGRSLTYGDRKANIDTRSGGGRRFWSNLNDSGNSFGAVPASSMNLSYGPTKSATISSKDGAMSRSSRYYVSSELKATLPSLDGRRLSKRNAANHASHHRMPDESASYRTRGEYESSSPRVPQKSLRRYYSTRTAQRLDVRRPASRSSRYSKTSDLPPSDPGRFVDDSDLTPHTDFTNRFVDSDFDPDSGVGRSSSPDQMMSRNNNLNINARMTSTSSKPYAKENQQLISSMAPVEQKNSFSTAREQYVAPALSFAEPVETQHNHMPKTTPLRGTSTVMNGSPIGPYSSSSNATGMYGVSKGHSSSTRRPFFSDVGSSQPAEEFVGSSSSHGRQQDSYIADDSDSERSYRRVRDQYLSKPRLSDKNRYSTFSEFPGQGTPSASQSNLRRSNTVRPTSFYYEKLHIKNDNPSFQALPYETTTQERKPVVKPDSIKTVKPEKKKSKGFFKKLMHKISHIFD</sequence>
<comment type="function">
    <text evidence="3">Acts as a membrane anchor for Skb1 in forming plasma membrane microdomains. Promotes mitotic entry by sequestering mitotic inhibitor Skb1 from its regulatory targets Cdr1 and Wee1.</text>
</comment>
<comment type="subunit">
    <text evidence="3">Interacts with Skb1.</text>
</comment>
<comment type="subcellular location">
    <subcellularLocation>
        <location evidence="3">Cell membrane</location>
    </subcellularLocation>
</comment>
<evidence type="ECO:0000256" key="1">
    <source>
        <dbReference type="SAM" id="MobiDB-lite"/>
    </source>
</evidence>
<evidence type="ECO:0000269" key="2">
    <source>
    </source>
</evidence>
<evidence type="ECO:0000269" key="3">
    <source>
    </source>
</evidence>
<evidence type="ECO:0000303" key="4">
    <source>
    </source>
</evidence>
<evidence type="ECO:0000312" key="5">
    <source>
        <dbReference type="PomBase" id="SPAC821.03c"/>
    </source>
</evidence>